<organism>
    <name type="scientific">Methanocaldococcus jannaschii (strain ATCC 43067 / DSM 2661 / JAL-1 / JCM 10045 / NBRC 100440)</name>
    <name type="common">Methanococcus jannaschii</name>
    <dbReference type="NCBI Taxonomy" id="243232"/>
    <lineage>
        <taxon>Archaea</taxon>
        <taxon>Methanobacteriati</taxon>
        <taxon>Methanobacteriota</taxon>
        <taxon>Methanomada group</taxon>
        <taxon>Methanococci</taxon>
        <taxon>Methanococcales</taxon>
        <taxon>Methanocaldococcaceae</taxon>
        <taxon>Methanocaldococcus</taxon>
    </lineage>
</organism>
<accession>Q58766</accession>
<keyword id="KW-0489">Methyltransferase</keyword>
<keyword id="KW-1185">Reference proteome</keyword>
<keyword id="KW-0808">Transferase</keyword>
<feature type="chain" id="PRO_0000135933" description="Uncharacterized methyltransferase MJ1371">
    <location>
        <begin position="1"/>
        <end position="244"/>
    </location>
</feature>
<gene>
    <name type="ordered locus">MJ1371</name>
</gene>
<proteinExistence type="inferred from homology"/>
<dbReference type="EC" id="2.1.1.-"/>
<dbReference type="EMBL" id="L77117">
    <property type="protein sequence ID" value="AAB99379.1"/>
    <property type="molecule type" value="Genomic_DNA"/>
</dbReference>
<dbReference type="PIR" id="B64471">
    <property type="entry name" value="B64471"/>
</dbReference>
<dbReference type="SMR" id="Q58766"/>
<dbReference type="FunCoup" id="Q58766">
    <property type="interactions" value="1"/>
</dbReference>
<dbReference type="STRING" id="243232.MJ_1371"/>
<dbReference type="PaxDb" id="243232-MJ_1371"/>
<dbReference type="EnsemblBacteria" id="AAB99379">
    <property type="protein sequence ID" value="AAB99379"/>
    <property type="gene ID" value="MJ_1371"/>
</dbReference>
<dbReference type="KEGG" id="mja:MJ_1371"/>
<dbReference type="eggNOG" id="arCOG00854">
    <property type="taxonomic scope" value="Archaea"/>
</dbReference>
<dbReference type="HOGENOM" id="CLU_086562_0_0_2"/>
<dbReference type="InParanoid" id="Q58766"/>
<dbReference type="PhylomeDB" id="Q58766"/>
<dbReference type="Proteomes" id="UP000000805">
    <property type="component" value="Chromosome"/>
</dbReference>
<dbReference type="GO" id="GO:0008168">
    <property type="term" value="F:methyltransferase activity"/>
    <property type="evidence" value="ECO:0007669"/>
    <property type="project" value="UniProtKB-KW"/>
</dbReference>
<dbReference type="GO" id="GO:0032259">
    <property type="term" value="P:methylation"/>
    <property type="evidence" value="ECO:0007669"/>
    <property type="project" value="UniProtKB-KW"/>
</dbReference>
<dbReference type="InterPro" id="IPR016764">
    <property type="entry name" value="MeTrfase_MtxX_xsu"/>
</dbReference>
<dbReference type="NCBIfam" id="TIGR03270">
    <property type="entry name" value="methan_mark_4"/>
    <property type="match status" value="1"/>
</dbReference>
<dbReference type="PIRSF" id="PIRSF019709">
    <property type="entry name" value="Methyltransf_MtxX"/>
    <property type="match status" value="1"/>
</dbReference>
<dbReference type="SUPFAM" id="SSF53659">
    <property type="entry name" value="Isocitrate/Isopropylmalate dehydrogenase-like"/>
    <property type="match status" value="1"/>
</dbReference>
<protein>
    <recommendedName>
        <fullName>Uncharacterized methyltransferase MJ1371</fullName>
        <ecNumber>2.1.1.-</ecNumber>
    </recommendedName>
</protein>
<evidence type="ECO:0000305" key="1"/>
<sequence>MIIMYAIGIGDNKEEVLKAYEKLKEEGIEVELIDNPKLLVDKLLDGEIDGAVRGSLSSSKVILYLRERIGKFYRASILKNPFTNGIFLLSPVGIDDISEDKNERIKDKIRIIEFASNFLKNYNIKAKVAVLSGGRLGDLGRNKVVDETIYEAEEIVEHFKGNVDIIHNGILIEEYLKDGYNIIIAVDGITGNLIFRCLGLICKIPGYGAVILSDKNVNFIDTSRNANWERYYNAIKFLIGGDFG</sequence>
<reference key="1">
    <citation type="journal article" date="1996" name="Science">
        <title>Complete genome sequence of the methanogenic archaeon, Methanococcus jannaschii.</title>
        <authorList>
            <person name="Bult C.J."/>
            <person name="White O."/>
            <person name="Olsen G.J."/>
            <person name="Zhou L."/>
            <person name="Fleischmann R.D."/>
            <person name="Sutton G.G."/>
            <person name="Blake J.A."/>
            <person name="FitzGerald L.M."/>
            <person name="Clayton R.A."/>
            <person name="Gocayne J.D."/>
            <person name="Kerlavage A.R."/>
            <person name="Dougherty B.A."/>
            <person name="Tomb J.-F."/>
            <person name="Adams M.D."/>
            <person name="Reich C.I."/>
            <person name="Overbeek R."/>
            <person name="Kirkness E.F."/>
            <person name="Weinstock K.G."/>
            <person name="Merrick J.M."/>
            <person name="Glodek A."/>
            <person name="Scott J.L."/>
            <person name="Geoghagen N.S.M."/>
            <person name="Weidman J.F."/>
            <person name="Fuhrmann J.L."/>
            <person name="Nguyen D."/>
            <person name="Utterback T.R."/>
            <person name="Kelley J.M."/>
            <person name="Peterson J.D."/>
            <person name="Sadow P.W."/>
            <person name="Hanna M.C."/>
            <person name="Cotton M.D."/>
            <person name="Roberts K.M."/>
            <person name="Hurst M.A."/>
            <person name="Kaine B.P."/>
            <person name="Borodovsky M."/>
            <person name="Klenk H.-P."/>
            <person name="Fraser C.M."/>
            <person name="Smith H.O."/>
            <person name="Woese C.R."/>
            <person name="Venter J.C."/>
        </authorList>
    </citation>
    <scope>NUCLEOTIDE SEQUENCE [LARGE SCALE GENOMIC DNA]</scope>
    <source>
        <strain>ATCC 43067 / DSM 2661 / JAL-1 / JCM 10045 / NBRC 100440</strain>
    </source>
</reference>
<name>Y1371_METJA</name>
<comment type="similarity">
    <text evidence="1">Belongs to the MtxX family.</text>
</comment>